<protein>
    <recommendedName>
        <fullName>Oxalate oxidase GF-2.8</fullName>
        <ecNumber>1.2.3.4</ecNumber>
    </recommendedName>
    <alternativeName>
        <fullName>Germin GF-2.8</fullName>
    </alternativeName>
</protein>
<name>GER2_WHEAT</name>
<sequence>MGYSKTLVAGLFAMLLLAPAVLATDPDPLQDFCVADLDGKAVSVNGHTCKPMSEAGDDFLFSSKLAKAGNTSTPNGSAVTELDVAEWPGTNTLGVSMNRVDFAPGGTNPPHIHPRATEIGIVMKGELLVGILGSLDSGNKLYSRVVRAGETFLIPRGLMHFQFNVGKTEASMVVSFNSQNPGIVFVPLTLFGSNPPIPTPVLTKALRVEARVVELLKSKFAAGF</sequence>
<keyword id="KW-0052">Apoplast</keyword>
<keyword id="KW-0134">Cell wall</keyword>
<keyword id="KW-0963">Cytoplasm</keyword>
<keyword id="KW-1015">Disulfide bond</keyword>
<keyword id="KW-0325">Glycoprotein</keyword>
<keyword id="KW-0464">Manganese</keyword>
<keyword id="KW-0479">Metal-binding</keyword>
<keyword id="KW-0560">Oxidoreductase</keyword>
<keyword id="KW-1185">Reference proteome</keyword>
<keyword id="KW-0964">Secreted</keyword>
<keyword id="KW-0732">Signal</keyword>
<comment type="function">
    <text>Produces developmental and stress-related release of hydrogen peroxide in the apoplast. May play an important role in several aspects of plant growth and defense mechanisms.</text>
</comment>
<comment type="catalytic activity">
    <reaction>
        <text>oxalate + O2 + 2 H(+) = H2O2 + 2 CO2</text>
        <dbReference type="Rhea" id="RHEA:21880"/>
        <dbReference type="ChEBI" id="CHEBI:15378"/>
        <dbReference type="ChEBI" id="CHEBI:15379"/>
        <dbReference type="ChEBI" id="CHEBI:16240"/>
        <dbReference type="ChEBI" id="CHEBI:16526"/>
        <dbReference type="ChEBI" id="CHEBI:30623"/>
        <dbReference type="EC" id="1.2.3.4"/>
    </reaction>
</comment>
<comment type="subunit">
    <text>Oligomer (believed to be a pentamer but probably hexamer).</text>
</comment>
<comment type="subcellular location">
    <subcellularLocation>
        <location>Secreted</location>
        <location>Extracellular space</location>
        <location>Apoplast</location>
    </subcellularLocation>
    <subcellularLocation>
        <location>Cytoplasm</location>
    </subcellularLocation>
    <subcellularLocation>
        <location>Secreted</location>
        <location>Cell wall</location>
    </subcellularLocation>
    <text>Found in the apoplast and the cytoplasm of germinating embryo cells. Associated with the cell wall.</text>
</comment>
<comment type="induction">
    <text>By auxin, pathogens and heavy metal ions.</text>
</comment>
<comment type="miscellaneous">
    <text>Associated mostly with highly substituted forms of glucuronogalactoarabinoxylans.</text>
</comment>
<comment type="similarity">
    <text evidence="3">Belongs to the germin family.</text>
</comment>
<feature type="signal peptide">
    <location>
        <begin position="1"/>
        <end position="23"/>
    </location>
</feature>
<feature type="chain" id="PRO_0000010834" description="Oxalate oxidase GF-2.8">
    <location>
        <begin position="24"/>
        <end position="224"/>
    </location>
</feature>
<feature type="domain" description="Cupin type-1" evidence="2">
    <location>
        <begin position="63"/>
        <end position="214"/>
    </location>
</feature>
<feature type="binding site" evidence="1">
    <location>
        <position position="111"/>
    </location>
    <ligand>
        <name>Mn(2+)</name>
        <dbReference type="ChEBI" id="CHEBI:29035"/>
    </ligand>
</feature>
<feature type="binding site" evidence="1">
    <location>
        <position position="113"/>
    </location>
    <ligand>
        <name>Mn(2+)</name>
        <dbReference type="ChEBI" id="CHEBI:29035"/>
    </ligand>
</feature>
<feature type="binding site" evidence="1">
    <location>
        <position position="118"/>
    </location>
    <ligand>
        <name>Mn(2+)</name>
        <dbReference type="ChEBI" id="CHEBI:29035"/>
    </ligand>
</feature>
<feature type="binding site" evidence="1">
    <location>
        <position position="160"/>
    </location>
    <ligand>
        <name>Mn(2+)</name>
        <dbReference type="ChEBI" id="CHEBI:29035"/>
    </ligand>
</feature>
<feature type="glycosylation site" description="N-linked (GlcNAc...) asparagine" evidence="2">
    <location>
        <position position="70"/>
    </location>
</feature>
<feature type="glycosylation site" description="N-linked (GlcNAc...) asparagine" evidence="2">
    <location>
        <position position="75"/>
    </location>
</feature>
<feature type="disulfide bond" evidence="1">
    <location>
        <begin position="33"/>
        <end position="49"/>
    </location>
</feature>
<reference key="1">
    <citation type="journal article" date="1991" name="J. Biol. Chem.">
        <title>Homologies between members of the germin gene family in hexaploid wheat and similarities between these wheat germins and certain Physarum spherulins.</title>
        <authorList>
            <person name="Lane B.G."/>
            <person name="Bernier F."/>
            <person name="Dratewka-Kos E."/>
            <person name="Shafai R."/>
            <person name="Kennedy T.D."/>
            <person name="Pyne C."/>
            <person name="Munro J.R."/>
            <person name="Vaughan T."/>
            <person name="Walters D."/>
            <person name="Altomare F."/>
        </authorList>
    </citation>
    <scope>NUCLEOTIDE SEQUENCE [GENOMIC DNA]</scope>
</reference>
<reference key="2">
    <citation type="journal article" date="1989" name="J. Biol. Chem.">
        <title>Polypeptide structure of germin as deduced from cDNA sequencing.</title>
        <authorList>
            <person name="Dratewka-Kos E."/>
            <person name="Rahman S."/>
            <person name="Grzekzak Z.F."/>
            <person name="Kennedy T.D."/>
            <person name="Murray R.K."/>
            <person name="Lane B.G."/>
        </authorList>
    </citation>
    <scope>NUCLEOTIDE SEQUENCE [MRNA]</scope>
</reference>
<reference key="3">
    <citation type="journal article" date="1999" name="Plant Mol. Biol.">
        <title>Regulation by biotic and abiotic stress of a wheat germin gene encoding oxalate oxidase, a H2O2-producing enzyme.</title>
        <authorList>
            <person name="Berna A."/>
            <person name="Bernier F."/>
        </authorList>
    </citation>
    <scope>CHARACTERIZATION</scope>
</reference>
<accession>P15290</accession>
<evidence type="ECO:0000250" key="1"/>
<evidence type="ECO:0000255" key="2"/>
<evidence type="ECO:0000305" key="3"/>
<dbReference type="EC" id="1.2.3.4"/>
<dbReference type="EMBL" id="M21962">
    <property type="protein sequence ID" value="AAA34268.1"/>
    <property type="molecule type" value="mRNA"/>
</dbReference>
<dbReference type="EMBL" id="M63223">
    <property type="protein sequence ID" value="AAA34270.1"/>
    <property type="molecule type" value="Genomic_DNA"/>
</dbReference>
<dbReference type="PIR" id="A40391">
    <property type="entry name" value="A33268"/>
</dbReference>
<dbReference type="RefSeq" id="NP_001414930.1">
    <property type="nucleotide sequence ID" value="NM_001428001.1"/>
</dbReference>
<dbReference type="SMR" id="P15290"/>
<dbReference type="STRING" id="4565.P15290"/>
<dbReference type="PaxDb" id="4565-Traes_4BS_7AE61936D.1"/>
<dbReference type="EnsemblPlants" id="TraesARI4D03G02460090.1">
    <property type="protein sequence ID" value="TraesARI4D03G02460090.1.CDS1"/>
    <property type="gene ID" value="TraesARI4D03G02460090"/>
</dbReference>
<dbReference type="EnsemblPlants" id="TraesCAD_scaffold_071769_01G000600.1">
    <property type="protein sequence ID" value="TraesCAD_scaffold_071769_01G000600.1"/>
    <property type="gene ID" value="TraesCAD_scaffold_071769_01G000600"/>
</dbReference>
<dbReference type="EnsemblPlants" id="TraesCLE_scaffold_067550_01G000100.1">
    <property type="protein sequence ID" value="TraesCLE_scaffold_067550_01G000100.1"/>
    <property type="gene ID" value="TraesCLE_scaffold_067550_01G000100"/>
</dbReference>
<dbReference type="EnsemblPlants" id="TraesCS4D02G032000.1">
    <property type="protein sequence ID" value="TraesCS4D02G032000.1.cds1"/>
    <property type="gene ID" value="TraesCS4D02G032000"/>
</dbReference>
<dbReference type="EnsemblPlants" id="TraesCS4D03G0053700.1">
    <property type="protein sequence ID" value="TraesCS4D03G0053700.1.CDS1"/>
    <property type="gene ID" value="TraesCS4D03G0053700"/>
</dbReference>
<dbReference type="EnsemblPlants" id="TraesJAG4D03G02419000.1">
    <property type="protein sequence ID" value="TraesJAG4D03G02419000.1.CDS1"/>
    <property type="gene ID" value="TraesJAG4D03G02419000"/>
</dbReference>
<dbReference type="EnsemblPlants" id="TraesJUL4D03G02440540.1">
    <property type="protein sequence ID" value="TraesJUL4D03G02440540.1.CDS1"/>
    <property type="gene ID" value="TraesJUL4D03G02440540"/>
</dbReference>
<dbReference type="EnsemblPlants" id="TraesKAR4D01G0012260.1">
    <property type="protein sequence ID" value="cds.TraesKAR4D01G0012260.1"/>
    <property type="gene ID" value="TraesKAR4D01G0012260"/>
</dbReference>
<dbReference type="EnsemblPlants" id="TraesLAC4D03G02375060.1">
    <property type="protein sequence ID" value="TraesLAC4D03G02375060.1.CDS1"/>
    <property type="gene ID" value="TraesLAC4D03G02375060"/>
</dbReference>
<dbReference type="EnsemblPlants" id="TraesLDM4D03G02423600.1">
    <property type="protein sequence ID" value="TraesLDM4D03G02423600.1.CDS1"/>
    <property type="gene ID" value="TraesLDM4D03G02423600"/>
</dbReference>
<dbReference type="EnsemblPlants" id="TraesMAC4D03G02419930.1">
    <property type="protein sequence ID" value="TraesMAC4D03G02419930.1.CDS1"/>
    <property type="gene ID" value="TraesMAC4D03G02419930"/>
</dbReference>
<dbReference type="EnsemblPlants" id="TraesNOR4D03G02439590.1">
    <property type="protein sequence ID" value="TraesNOR4D03G02439590.1.CDS1"/>
    <property type="gene ID" value="TraesNOR4D03G02439590"/>
</dbReference>
<dbReference type="EnsemblPlants" id="TraesPARA_EIv1.0_1414020.1">
    <property type="protein sequence ID" value="TraesPARA_EIv1.0_1414020.1.CDS1"/>
    <property type="gene ID" value="TraesPARA_EIv1.0_1414020"/>
</dbReference>
<dbReference type="EnsemblPlants" id="TraesRN4D0100056500.1">
    <property type="protein sequence ID" value="TraesRN4D0100056500.1"/>
    <property type="gene ID" value="TraesRN4D0100056500"/>
</dbReference>
<dbReference type="EnsemblPlants" id="TraesROB_scaffold_072937_01G000100.1">
    <property type="protein sequence ID" value="TraesROB_scaffold_072937_01G000100.1"/>
    <property type="gene ID" value="TraesROB_scaffold_072937_01G000100"/>
</dbReference>
<dbReference type="EnsemblPlants" id="TraesSTA4D03G02416850.1">
    <property type="protein sequence ID" value="TraesSTA4D03G02416850.1.CDS1"/>
    <property type="gene ID" value="TraesSTA4D03G02416850"/>
</dbReference>
<dbReference type="EnsemblPlants" id="TraesSYM4D03G02448660.1">
    <property type="protein sequence ID" value="TraesSYM4D03G02448660.1.CDS1"/>
    <property type="gene ID" value="TraesSYM4D03G02448660"/>
</dbReference>
<dbReference type="EnsemblPlants" id="TraesWEE_scaffold_072014_01G000100.1">
    <property type="protein sequence ID" value="TraesWEE_scaffold_072014_01G000100.1"/>
    <property type="gene ID" value="TraesWEE_scaffold_072014_01G000100"/>
</dbReference>
<dbReference type="GeneID" id="543498"/>
<dbReference type="Gramene" id="TraesARI4D03G02460090.1">
    <property type="protein sequence ID" value="TraesARI4D03G02460090.1.CDS1"/>
    <property type="gene ID" value="TraesARI4D03G02460090"/>
</dbReference>
<dbReference type="Gramene" id="TraesCAD_scaffold_071769_01G000600.1">
    <property type="protein sequence ID" value="TraesCAD_scaffold_071769_01G000600.1"/>
    <property type="gene ID" value="TraesCAD_scaffold_071769_01G000600"/>
</dbReference>
<dbReference type="Gramene" id="TraesCLE_scaffold_067550_01G000100.1">
    <property type="protein sequence ID" value="TraesCLE_scaffold_067550_01G000100.1"/>
    <property type="gene ID" value="TraesCLE_scaffold_067550_01G000100"/>
</dbReference>
<dbReference type="Gramene" id="TraesCS4D02G032000.1">
    <property type="protein sequence ID" value="TraesCS4D02G032000.1.cds1"/>
    <property type="gene ID" value="TraesCS4D02G032000"/>
</dbReference>
<dbReference type="Gramene" id="TraesCS4D03G0053700.1">
    <property type="protein sequence ID" value="TraesCS4D03G0053700.1.CDS1"/>
    <property type="gene ID" value="TraesCS4D03G0053700"/>
</dbReference>
<dbReference type="Gramene" id="TraesJAG4D03G02419000.1">
    <property type="protein sequence ID" value="TraesJAG4D03G02419000.1.CDS1"/>
    <property type="gene ID" value="TraesJAG4D03G02419000"/>
</dbReference>
<dbReference type="Gramene" id="TraesJUL4D03G02440540.1">
    <property type="protein sequence ID" value="TraesJUL4D03G02440540.1.CDS1"/>
    <property type="gene ID" value="TraesJUL4D03G02440540"/>
</dbReference>
<dbReference type="Gramene" id="TraesKAR4D01G0012260.1">
    <property type="protein sequence ID" value="cds.TraesKAR4D01G0012260.1"/>
    <property type="gene ID" value="TraesKAR4D01G0012260"/>
</dbReference>
<dbReference type="Gramene" id="TraesLAC4D03G02375060.1">
    <property type="protein sequence ID" value="TraesLAC4D03G02375060.1.CDS1"/>
    <property type="gene ID" value="TraesLAC4D03G02375060"/>
</dbReference>
<dbReference type="Gramene" id="TraesLDM4D03G02423600.1">
    <property type="protein sequence ID" value="TraesLDM4D03G02423600.1.CDS1"/>
    <property type="gene ID" value="TraesLDM4D03G02423600"/>
</dbReference>
<dbReference type="Gramene" id="TraesMAC4D03G02419930.1">
    <property type="protein sequence ID" value="TraesMAC4D03G02419930.1.CDS1"/>
    <property type="gene ID" value="TraesMAC4D03G02419930"/>
</dbReference>
<dbReference type="Gramene" id="TraesNOR4D03G02439590.1">
    <property type="protein sequence ID" value="TraesNOR4D03G02439590.1.CDS1"/>
    <property type="gene ID" value="TraesNOR4D03G02439590"/>
</dbReference>
<dbReference type="Gramene" id="TraesPARA_EIv1.0_1414020.1">
    <property type="protein sequence ID" value="TraesPARA_EIv1.0_1414020.1.CDS1"/>
    <property type="gene ID" value="TraesPARA_EIv1.0_1414020"/>
</dbReference>
<dbReference type="Gramene" id="TraesRN4D0100056500.1">
    <property type="protein sequence ID" value="TraesRN4D0100056500.1"/>
    <property type="gene ID" value="TraesRN4D0100056500"/>
</dbReference>
<dbReference type="Gramene" id="TraesROB_scaffold_072937_01G000100.1">
    <property type="protein sequence ID" value="TraesROB_scaffold_072937_01G000100.1"/>
    <property type="gene ID" value="TraesROB_scaffold_072937_01G000100"/>
</dbReference>
<dbReference type="Gramene" id="TraesSTA4D03G02416850.1">
    <property type="protein sequence ID" value="TraesSTA4D03G02416850.1.CDS1"/>
    <property type="gene ID" value="TraesSTA4D03G02416850"/>
</dbReference>
<dbReference type="Gramene" id="TraesSYM4D03G02448660.1">
    <property type="protein sequence ID" value="TraesSYM4D03G02448660.1.CDS1"/>
    <property type="gene ID" value="TraesSYM4D03G02448660"/>
</dbReference>
<dbReference type="Gramene" id="TraesWEE_scaffold_072014_01G000100.1">
    <property type="protein sequence ID" value="TraesWEE_scaffold_072014_01G000100.1"/>
    <property type="gene ID" value="TraesWEE_scaffold_072014_01G000100"/>
</dbReference>
<dbReference type="eggNOG" id="ENOG502QSRM">
    <property type="taxonomic scope" value="Eukaryota"/>
</dbReference>
<dbReference type="OMA" id="MWERRIG"/>
<dbReference type="OrthoDB" id="635918at2759"/>
<dbReference type="BRENDA" id="1.2.3.4">
    <property type="organism ID" value="6500"/>
</dbReference>
<dbReference type="Proteomes" id="UP000019116">
    <property type="component" value="Chromosome 4D"/>
</dbReference>
<dbReference type="ExpressionAtlas" id="P15290">
    <property type="expression patterns" value="differential"/>
</dbReference>
<dbReference type="GO" id="GO:0048046">
    <property type="term" value="C:apoplast"/>
    <property type="evidence" value="ECO:0007669"/>
    <property type="project" value="UniProtKB-SubCell"/>
</dbReference>
<dbReference type="GO" id="GO:0005737">
    <property type="term" value="C:cytoplasm"/>
    <property type="evidence" value="ECO:0007669"/>
    <property type="project" value="UniProtKB-SubCell"/>
</dbReference>
<dbReference type="GO" id="GO:0030145">
    <property type="term" value="F:manganese ion binding"/>
    <property type="evidence" value="ECO:0007669"/>
    <property type="project" value="InterPro"/>
</dbReference>
<dbReference type="GO" id="GO:0050162">
    <property type="term" value="F:oxalate oxidase activity"/>
    <property type="evidence" value="ECO:0007669"/>
    <property type="project" value="UniProtKB-EC"/>
</dbReference>
<dbReference type="CDD" id="cd02241">
    <property type="entry name" value="cupin_OxOx"/>
    <property type="match status" value="1"/>
</dbReference>
<dbReference type="FunFam" id="2.60.120.10:FF:000005">
    <property type="entry name" value="Germin-like protein subfamily 1 member 8"/>
    <property type="match status" value="1"/>
</dbReference>
<dbReference type="Gene3D" id="2.60.120.10">
    <property type="entry name" value="Jelly Rolls"/>
    <property type="match status" value="1"/>
</dbReference>
<dbReference type="InterPro" id="IPR006045">
    <property type="entry name" value="Cupin_1"/>
</dbReference>
<dbReference type="InterPro" id="IPR001929">
    <property type="entry name" value="Germin"/>
</dbReference>
<dbReference type="InterPro" id="IPR019780">
    <property type="entry name" value="Germin_Mn-BS"/>
</dbReference>
<dbReference type="InterPro" id="IPR014710">
    <property type="entry name" value="RmlC-like_jellyroll"/>
</dbReference>
<dbReference type="InterPro" id="IPR011051">
    <property type="entry name" value="RmlC_Cupin_sf"/>
</dbReference>
<dbReference type="PANTHER" id="PTHR31238">
    <property type="entry name" value="GERMIN-LIKE PROTEIN SUBFAMILY 3 MEMBER 3"/>
    <property type="match status" value="1"/>
</dbReference>
<dbReference type="Pfam" id="PF00190">
    <property type="entry name" value="Cupin_1"/>
    <property type="match status" value="1"/>
</dbReference>
<dbReference type="PRINTS" id="PR00325">
    <property type="entry name" value="GERMIN"/>
</dbReference>
<dbReference type="SMART" id="SM00835">
    <property type="entry name" value="Cupin_1"/>
    <property type="match status" value="1"/>
</dbReference>
<dbReference type="SUPFAM" id="SSF51182">
    <property type="entry name" value="RmlC-like cupins"/>
    <property type="match status" value="1"/>
</dbReference>
<dbReference type="PROSITE" id="PS00725">
    <property type="entry name" value="GERMIN"/>
    <property type="match status" value="1"/>
</dbReference>
<organism>
    <name type="scientific">Triticum aestivum</name>
    <name type="common">Wheat</name>
    <dbReference type="NCBI Taxonomy" id="4565"/>
    <lineage>
        <taxon>Eukaryota</taxon>
        <taxon>Viridiplantae</taxon>
        <taxon>Streptophyta</taxon>
        <taxon>Embryophyta</taxon>
        <taxon>Tracheophyta</taxon>
        <taxon>Spermatophyta</taxon>
        <taxon>Magnoliopsida</taxon>
        <taxon>Liliopsida</taxon>
        <taxon>Poales</taxon>
        <taxon>Poaceae</taxon>
        <taxon>BOP clade</taxon>
        <taxon>Pooideae</taxon>
        <taxon>Triticodae</taxon>
        <taxon>Triticeae</taxon>
        <taxon>Triticinae</taxon>
        <taxon>Triticum</taxon>
    </lineage>
</organism>
<proteinExistence type="evidence at protein level"/>